<protein>
    <recommendedName>
        <fullName>Putative enzymatic polyprotein</fullName>
    </recommendedName>
    <domain>
        <recommendedName>
            <fullName>Protease</fullName>
            <shortName>PR</shortName>
            <ecNumber>3.4.23.-</ecNumber>
        </recommendedName>
    </domain>
    <domain>
        <recommendedName>
            <fullName>Reverse transcriptase</fullName>
            <shortName>RT</shortName>
            <ecNumber>2.7.7.49</ecNumber>
        </recommendedName>
    </domain>
    <domain>
        <recommendedName>
            <fullName>Ribonuclease H</fullName>
            <ecNumber>3.1.26.4</ecNumber>
        </recommendedName>
    </domain>
</protein>
<reference key="1">
    <citation type="journal article" date="1998" name="Arch. Virol.">
        <title>Cassava vein mosaic virus (CsVMV), type species for a new genus of plant double stranded DNA viruses?</title>
        <authorList>
            <person name="de Kochko A."/>
            <person name="Verdaguer B."/>
            <person name="Taylor N."/>
            <person name="Carcamo R."/>
            <person name="Beachy R.N."/>
            <person name="Fauquet C."/>
        </authorList>
    </citation>
    <scope>NUCLEOTIDE SEQUENCE [GENOMIC DNA]</scope>
</reference>
<reference key="2">
    <citation type="submission" date="1996-06" db="EMBL/GenBank/DDBJ databases">
        <authorList>
            <person name="Kochko de A."/>
            <person name="Verdaguer B."/>
            <person name="Beachy R.N."/>
            <person name="Fauquet C."/>
        </authorList>
    </citation>
    <scope>NUCLEOTIDE SEQUENCE [GENOMIC DNA]</scope>
</reference>
<reference key="3">
    <citation type="journal article" date="1995" name="J. Gen. Virol.">
        <title>Characterization of cassava vein mosaic virus: a distinct plant pararetrovirus.</title>
        <authorList>
            <person name="Calvert L.A."/>
            <person name="Ospina M.D."/>
            <person name="Shepherd R.J."/>
        </authorList>
    </citation>
    <scope>NUCLEOTIDE SEQUENCE [GENOMIC DNA]</scope>
</reference>
<comment type="function">
    <text evidence="1">Encodes for at least two polypeptides: protease (PR) and reverse transcriptase (RT). The protease processes the polyprotein in cis. Reverse transcriptase is multifunctional enzyme that converts the viral RNA genome into dsDNA in viral cytoplasmic capsids. This enzyme displays a DNA polymerase activity that can copy either DNA or RNA templates, and a ribonuclease H (RNase H) activity that cleaves the RNA strand of RNA-DNA heteroduplexes in a partially processive 3'- to 5'-endonucleasic mode. Neo-synthesized pregenomic RNA (pgRNA) are encapsidated, and reverse-transcribed inside the nucleocapsid. Partial (+)DNA is synthesized from the (-)DNA template and generates the relaxed circular DNA (RC-DNA) genome. After budding and infection, the RC-DNA migrates in the nucleus, and is converted into a plasmid-like covalently closed circular DNA (cccDNA) (By similarity).</text>
</comment>
<comment type="catalytic activity">
    <reaction evidence="2">
        <text>DNA(n) + a 2'-deoxyribonucleoside 5'-triphosphate = DNA(n+1) + diphosphate</text>
        <dbReference type="Rhea" id="RHEA:22508"/>
        <dbReference type="Rhea" id="RHEA-COMP:17339"/>
        <dbReference type="Rhea" id="RHEA-COMP:17340"/>
        <dbReference type="ChEBI" id="CHEBI:33019"/>
        <dbReference type="ChEBI" id="CHEBI:61560"/>
        <dbReference type="ChEBI" id="CHEBI:173112"/>
        <dbReference type="EC" id="2.7.7.49"/>
    </reaction>
</comment>
<comment type="catalytic activity">
    <reaction>
        <text>Endonucleolytic cleavage to 5'-phosphomonoester.</text>
        <dbReference type="EC" id="3.1.26.4"/>
    </reaction>
</comment>
<accession>Q89703</accession>
<gene>
    <name type="ORF">ORF 3</name>
</gene>
<organism>
    <name type="scientific">Cassava vein mosaic virus</name>
    <name type="common">CsVMV</name>
    <dbReference type="NCBI Taxonomy" id="38062"/>
    <lineage>
        <taxon>Viruses</taxon>
        <taxon>Riboviria</taxon>
        <taxon>Pararnavirae</taxon>
        <taxon>Artverviricota</taxon>
        <taxon>Revtraviricetes</taxon>
        <taxon>Ortervirales</taxon>
        <taxon>Caulimoviridae</taxon>
        <taxon>Cavemovirus</taxon>
        <taxon>Cavemovirus venamanihotis</taxon>
    </lineage>
</organism>
<organismHost>
    <name type="scientific">Manihot esculenta</name>
    <name type="common">Cassava</name>
    <name type="synonym">Jatropha manihot</name>
    <dbReference type="NCBI Taxonomy" id="3983"/>
</organismHost>
<feature type="chain" id="PRO_0000397901" description="Putative enzymatic polyprotein">
    <location>
        <begin position="1"/>
        <end position="652"/>
    </location>
</feature>
<feature type="domain" description="Peptidase A2">
    <location>
        <begin position="21"/>
        <end position="99"/>
    </location>
</feature>
<feature type="domain" description="Reverse transcriptase" evidence="2">
    <location>
        <begin position="231"/>
        <end position="413"/>
    </location>
</feature>
<feature type="active site" evidence="1">
    <location>
        <position position="26"/>
    </location>
</feature>
<feature type="binding site" evidence="2">
    <location>
        <position position="301"/>
    </location>
    <ligand>
        <name>Mg(2+)</name>
        <dbReference type="ChEBI" id="CHEBI:18420"/>
        <note>catalytic</note>
    </ligand>
</feature>
<feature type="binding site" evidence="2">
    <location>
        <position position="364"/>
    </location>
    <ligand>
        <name>Mg(2+)</name>
        <dbReference type="ChEBI" id="CHEBI:18420"/>
        <note>catalytic</note>
    </ligand>
</feature>
<feature type="binding site" evidence="2">
    <location>
        <position position="365"/>
    </location>
    <ligand>
        <name>Mg(2+)</name>
        <dbReference type="ChEBI" id="CHEBI:18420"/>
        <note>catalytic</note>
    </ligand>
</feature>
<keyword id="KW-0064">Aspartyl protease</keyword>
<keyword id="KW-0233">DNA recombination</keyword>
<keyword id="KW-0238">DNA-binding</keyword>
<keyword id="KW-0239">DNA-directed DNA polymerase</keyword>
<keyword id="KW-0255">Endonuclease</keyword>
<keyword id="KW-0378">Hydrolase</keyword>
<keyword id="KW-0460">Magnesium</keyword>
<keyword id="KW-0479">Metal-binding</keyword>
<keyword id="KW-0511">Multifunctional enzyme</keyword>
<keyword id="KW-0540">Nuclease</keyword>
<keyword id="KW-0548">Nucleotidyltransferase</keyword>
<keyword id="KW-0645">Protease</keyword>
<keyword id="KW-1185">Reference proteome</keyword>
<keyword id="KW-0694">RNA-binding</keyword>
<keyword id="KW-0695">RNA-directed DNA polymerase</keyword>
<keyword id="KW-0808">Transferase</keyword>
<dbReference type="EC" id="3.4.23.-"/>
<dbReference type="EC" id="2.7.7.49"/>
<dbReference type="EC" id="3.1.26.4"/>
<dbReference type="EMBL" id="U20341">
    <property type="protein sequence ID" value="AAA79873.1"/>
    <property type="molecule type" value="Genomic_DNA"/>
</dbReference>
<dbReference type="EMBL" id="U59751">
    <property type="protein sequence ID" value="AAB03327.1"/>
    <property type="molecule type" value="Genomic_DNA"/>
</dbReference>
<dbReference type="RefSeq" id="NP_056848.1">
    <property type="nucleotide sequence ID" value="NC_001648.1"/>
</dbReference>
<dbReference type="SMR" id="Q89703"/>
<dbReference type="MEROPS" id="A03.005"/>
<dbReference type="KEGG" id="vg:1403416"/>
<dbReference type="OrthoDB" id="2224at10239"/>
<dbReference type="Proteomes" id="UP000002244">
    <property type="component" value="Genome"/>
</dbReference>
<dbReference type="GO" id="GO:0004190">
    <property type="term" value="F:aspartic-type endopeptidase activity"/>
    <property type="evidence" value="ECO:0007669"/>
    <property type="project" value="UniProtKB-KW"/>
</dbReference>
<dbReference type="GO" id="GO:0003677">
    <property type="term" value="F:DNA binding"/>
    <property type="evidence" value="ECO:0007669"/>
    <property type="project" value="UniProtKB-KW"/>
</dbReference>
<dbReference type="GO" id="GO:0003887">
    <property type="term" value="F:DNA-directed DNA polymerase activity"/>
    <property type="evidence" value="ECO:0007669"/>
    <property type="project" value="UniProtKB-KW"/>
</dbReference>
<dbReference type="GO" id="GO:0046872">
    <property type="term" value="F:metal ion binding"/>
    <property type="evidence" value="ECO:0007669"/>
    <property type="project" value="UniProtKB-KW"/>
</dbReference>
<dbReference type="GO" id="GO:0003723">
    <property type="term" value="F:RNA binding"/>
    <property type="evidence" value="ECO:0007669"/>
    <property type="project" value="UniProtKB-KW"/>
</dbReference>
<dbReference type="GO" id="GO:0003964">
    <property type="term" value="F:RNA-directed DNA polymerase activity"/>
    <property type="evidence" value="ECO:0007669"/>
    <property type="project" value="UniProtKB-KW"/>
</dbReference>
<dbReference type="GO" id="GO:0004523">
    <property type="term" value="F:RNA-DNA hybrid ribonuclease activity"/>
    <property type="evidence" value="ECO:0007669"/>
    <property type="project" value="UniProtKB-EC"/>
</dbReference>
<dbReference type="GO" id="GO:0006310">
    <property type="term" value="P:DNA recombination"/>
    <property type="evidence" value="ECO:0007669"/>
    <property type="project" value="UniProtKB-KW"/>
</dbReference>
<dbReference type="GO" id="GO:0006508">
    <property type="term" value="P:proteolysis"/>
    <property type="evidence" value="ECO:0007669"/>
    <property type="project" value="UniProtKB-KW"/>
</dbReference>
<dbReference type="CDD" id="cd00303">
    <property type="entry name" value="retropepsin_like"/>
    <property type="match status" value="1"/>
</dbReference>
<dbReference type="CDD" id="cd01647">
    <property type="entry name" value="RT_LTR"/>
    <property type="match status" value="1"/>
</dbReference>
<dbReference type="Gene3D" id="3.30.70.270">
    <property type="match status" value="2"/>
</dbReference>
<dbReference type="Gene3D" id="2.40.70.10">
    <property type="entry name" value="Acid Proteases"/>
    <property type="match status" value="1"/>
</dbReference>
<dbReference type="Gene3D" id="3.10.10.10">
    <property type="entry name" value="HIV Type 1 Reverse Transcriptase, subunit A, domain 1"/>
    <property type="match status" value="1"/>
</dbReference>
<dbReference type="InterPro" id="IPR043502">
    <property type="entry name" value="DNA/RNA_pol_sf"/>
</dbReference>
<dbReference type="InterPro" id="IPR000588">
    <property type="entry name" value="Pept_A3A"/>
</dbReference>
<dbReference type="InterPro" id="IPR021109">
    <property type="entry name" value="Peptidase_aspartic_dom_sf"/>
</dbReference>
<dbReference type="InterPro" id="IPR043128">
    <property type="entry name" value="Rev_trsase/Diguanyl_cyclase"/>
</dbReference>
<dbReference type="InterPro" id="IPR000477">
    <property type="entry name" value="RT_dom"/>
</dbReference>
<dbReference type="InterPro" id="IPR041373">
    <property type="entry name" value="RT_RNaseH"/>
</dbReference>
<dbReference type="InterPro" id="IPR051320">
    <property type="entry name" value="Viral_Replic_Matur_Polypro"/>
</dbReference>
<dbReference type="PANTHER" id="PTHR33064">
    <property type="entry name" value="POL PROTEIN"/>
    <property type="match status" value="1"/>
</dbReference>
<dbReference type="PANTHER" id="PTHR33064:SF37">
    <property type="entry name" value="RIBONUCLEASE H"/>
    <property type="match status" value="1"/>
</dbReference>
<dbReference type="Pfam" id="PF02160">
    <property type="entry name" value="Peptidase_A3"/>
    <property type="match status" value="1"/>
</dbReference>
<dbReference type="Pfam" id="PF17917">
    <property type="entry name" value="RT_RNaseH"/>
    <property type="match status" value="1"/>
</dbReference>
<dbReference type="Pfam" id="PF00078">
    <property type="entry name" value="RVT_1"/>
    <property type="match status" value="1"/>
</dbReference>
<dbReference type="SUPFAM" id="SSF56672">
    <property type="entry name" value="DNA/RNA polymerases"/>
    <property type="match status" value="1"/>
</dbReference>
<dbReference type="PROSITE" id="PS50878">
    <property type="entry name" value="RT_POL"/>
    <property type="match status" value="1"/>
</dbReference>
<name>POL_CSVMV</name>
<proteinExistence type="inferred from homology"/>
<evidence type="ECO:0000250" key="1"/>
<evidence type="ECO:0000255" key="2">
    <source>
        <dbReference type="PROSITE-ProRule" id="PRU00405"/>
    </source>
</evidence>
<sequence length="652" mass="77054">MNKITYMTIKISIPKYMSRIYHGLFDTGANICICKKKVLPDELWHKTENLVLRGFNDEKHVAEYRADNITIMIAKEKFIIPYIYAMDEMSPDIIIGATFYNKYSPIELDIGKGIIKFTKNNEKYPNYLVKYPKKRKLVPWTKGNPSVTETMENIGINQIESRNPIEEEINQILGTDIYGENPLEKWEKHKTLAKIELKNETDNIYKPPMLYQETDLPEFKMHIEEMIKEGFIEEKTNFEDKKYSSPAFIVNKHSEQKRGKTRMVIDYKDLNKKAKVVKYPIPNKDTLIHRSIQARYYSKFDCKSGFYHIKLEEDSKKYTAFTVPQGYYQWKVLPFGYHNSPSIFQQFMDRIFRPYYDFIIVYIDDILVFSKTIEEHKIHIAKFRDITLANGLIISKKKTELCKEKIDFLGVQIEQGGIELQPHIINKILEKHTKIKNKTELQSILGLLNQIRHFIPHLAQILLPIQKKLKIKDEEIWTWTKEDEEKIKLIQDYSKNLVIKMKYPINKEDMNWIIEVDASNNAYGSCLKYKPKNSKIEYLCRYNSGTFKENEQKYDINRKELIAVYQGLQSYSLFTCEGNKLVRTDNSQVYYWIKNDTNKKSIEFRNIKYLLAKIAVYNFEIQLIDGKTNIIADYLSRYNSSDTDGRYDEANT</sequence>